<proteinExistence type="inferred from homology"/>
<feature type="chain" id="PRO_0000241976" description="Arginine--tRNA ligase">
    <location>
        <begin position="1"/>
        <end position="579"/>
    </location>
</feature>
<feature type="short sequence motif" description="'HIGH' region">
    <location>
        <begin position="136"/>
        <end position="146"/>
    </location>
</feature>
<sequence length="579" mass="64676">MVSAGSTINLFGNFRCIVIQKIGELWGGEVTDSLLHKLIVAPPTEDRHGDVYTNAALVVGKFKRKNPMEIAEHLRQALAEVEGVDSVDVVPPGFVNLKCSNEVWYSAIRDINKAGKDYGAVNLGQGQKVNVEFVSANPTGPLHIGHARGAVFGDVLSNLLAWVGYDVTREYYVNDAGGQINTLVESVYLRYKEALGEQVTIGEGLYPGEYLKPIAKALVEKHGDKLLASEDRTAVIREFALKSILDLIREDMALLGVKHDVFTYEADLQRSRTVEKCVEFLQQKGMLYYGTLERPRGVEEEAAWQAREQLLFRSTDFGDDSDRALQKEDGSWTYFAGDIAYHFDKISRGFHDMILGLGFDHKGYVSRLKAAVHALSDGKATIDVKLHNMVNFLENGVPVKMSKRRGEFLTARDVVEEVGKDVARFIMMTRKNDVVLDFDFAKAKEQSKDSQIFYIQYAHARACSLMRNAPTLLPIEDVDFSRVSSAPEIALIKLLVRWPNIVESSAVNHEPHRIAFYLLEVAEAFHVLWGHGSRSVDMRFIVEGDIATTSARIYLVKVVALVISLGLSIFSIAPMEEMR</sequence>
<protein>
    <recommendedName>
        <fullName evidence="1">Arginine--tRNA ligase</fullName>
        <ecNumber evidence="1">6.1.1.19</ecNumber>
    </recommendedName>
    <alternativeName>
        <fullName evidence="1">Arginyl-tRNA synthetase</fullName>
        <shortName evidence="1">ArgRS</shortName>
    </alternativeName>
</protein>
<evidence type="ECO:0000255" key="1">
    <source>
        <dbReference type="HAMAP-Rule" id="MF_00123"/>
    </source>
</evidence>
<organism>
    <name type="scientific">Anaplasma marginale (strain St. Maries)</name>
    <dbReference type="NCBI Taxonomy" id="234826"/>
    <lineage>
        <taxon>Bacteria</taxon>
        <taxon>Pseudomonadati</taxon>
        <taxon>Pseudomonadota</taxon>
        <taxon>Alphaproteobacteria</taxon>
        <taxon>Rickettsiales</taxon>
        <taxon>Anaplasmataceae</taxon>
        <taxon>Anaplasma</taxon>
    </lineage>
</organism>
<keyword id="KW-0030">Aminoacyl-tRNA synthetase</keyword>
<keyword id="KW-0067">ATP-binding</keyword>
<keyword id="KW-0963">Cytoplasm</keyword>
<keyword id="KW-0436">Ligase</keyword>
<keyword id="KW-0547">Nucleotide-binding</keyword>
<keyword id="KW-0648">Protein biosynthesis</keyword>
<comment type="catalytic activity">
    <reaction evidence="1">
        <text>tRNA(Arg) + L-arginine + ATP = L-arginyl-tRNA(Arg) + AMP + diphosphate</text>
        <dbReference type="Rhea" id="RHEA:20301"/>
        <dbReference type="Rhea" id="RHEA-COMP:9658"/>
        <dbReference type="Rhea" id="RHEA-COMP:9673"/>
        <dbReference type="ChEBI" id="CHEBI:30616"/>
        <dbReference type="ChEBI" id="CHEBI:32682"/>
        <dbReference type="ChEBI" id="CHEBI:33019"/>
        <dbReference type="ChEBI" id="CHEBI:78442"/>
        <dbReference type="ChEBI" id="CHEBI:78513"/>
        <dbReference type="ChEBI" id="CHEBI:456215"/>
        <dbReference type="EC" id="6.1.1.19"/>
    </reaction>
</comment>
<comment type="subunit">
    <text evidence="1">Monomer.</text>
</comment>
<comment type="subcellular location">
    <subcellularLocation>
        <location evidence="1">Cytoplasm</location>
    </subcellularLocation>
</comment>
<comment type="similarity">
    <text evidence="1">Belongs to the class-I aminoacyl-tRNA synthetase family.</text>
</comment>
<dbReference type="EC" id="6.1.1.19" evidence="1"/>
<dbReference type="EMBL" id="CP000030">
    <property type="protein sequence ID" value="AAV86656.1"/>
    <property type="molecule type" value="Genomic_DNA"/>
</dbReference>
<dbReference type="SMR" id="Q5PAM4"/>
<dbReference type="KEGG" id="ama:AM678"/>
<dbReference type="PATRIC" id="fig|320483.3.peg.590"/>
<dbReference type="HOGENOM" id="CLU_006406_0_1_5"/>
<dbReference type="GO" id="GO:0005737">
    <property type="term" value="C:cytoplasm"/>
    <property type="evidence" value="ECO:0007669"/>
    <property type="project" value="UniProtKB-SubCell"/>
</dbReference>
<dbReference type="GO" id="GO:0004814">
    <property type="term" value="F:arginine-tRNA ligase activity"/>
    <property type="evidence" value="ECO:0007669"/>
    <property type="project" value="UniProtKB-UniRule"/>
</dbReference>
<dbReference type="GO" id="GO:0005524">
    <property type="term" value="F:ATP binding"/>
    <property type="evidence" value="ECO:0007669"/>
    <property type="project" value="UniProtKB-UniRule"/>
</dbReference>
<dbReference type="GO" id="GO:0006420">
    <property type="term" value="P:arginyl-tRNA aminoacylation"/>
    <property type="evidence" value="ECO:0007669"/>
    <property type="project" value="UniProtKB-UniRule"/>
</dbReference>
<dbReference type="CDD" id="cd00671">
    <property type="entry name" value="ArgRS_core"/>
    <property type="match status" value="1"/>
</dbReference>
<dbReference type="Gene3D" id="3.30.1360.70">
    <property type="entry name" value="Arginyl tRNA synthetase N-terminal domain"/>
    <property type="match status" value="1"/>
</dbReference>
<dbReference type="Gene3D" id="3.40.50.620">
    <property type="entry name" value="HUPs"/>
    <property type="match status" value="1"/>
</dbReference>
<dbReference type="Gene3D" id="1.10.730.10">
    <property type="entry name" value="Isoleucyl-tRNA Synthetase, Domain 1"/>
    <property type="match status" value="1"/>
</dbReference>
<dbReference type="HAMAP" id="MF_00123">
    <property type="entry name" value="Arg_tRNA_synth"/>
    <property type="match status" value="1"/>
</dbReference>
<dbReference type="InterPro" id="IPR001412">
    <property type="entry name" value="aa-tRNA-synth_I_CS"/>
</dbReference>
<dbReference type="InterPro" id="IPR001278">
    <property type="entry name" value="Arg-tRNA-ligase"/>
</dbReference>
<dbReference type="InterPro" id="IPR005148">
    <property type="entry name" value="Arg-tRNA-synth_N"/>
</dbReference>
<dbReference type="InterPro" id="IPR036695">
    <property type="entry name" value="Arg-tRNA-synth_N_sf"/>
</dbReference>
<dbReference type="InterPro" id="IPR035684">
    <property type="entry name" value="ArgRS_core"/>
</dbReference>
<dbReference type="InterPro" id="IPR008909">
    <property type="entry name" value="DALR_anticod-bd"/>
</dbReference>
<dbReference type="InterPro" id="IPR014729">
    <property type="entry name" value="Rossmann-like_a/b/a_fold"/>
</dbReference>
<dbReference type="InterPro" id="IPR009080">
    <property type="entry name" value="tRNAsynth_Ia_anticodon-bd"/>
</dbReference>
<dbReference type="NCBIfam" id="TIGR00456">
    <property type="entry name" value="argS"/>
    <property type="match status" value="1"/>
</dbReference>
<dbReference type="PANTHER" id="PTHR11956:SF5">
    <property type="entry name" value="ARGININE--TRNA LIGASE, CYTOPLASMIC"/>
    <property type="match status" value="1"/>
</dbReference>
<dbReference type="PANTHER" id="PTHR11956">
    <property type="entry name" value="ARGINYL-TRNA SYNTHETASE"/>
    <property type="match status" value="1"/>
</dbReference>
<dbReference type="Pfam" id="PF03485">
    <property type="entry name" value="Arg_tRNA_synt_N"/>
    <property type="match status" value="1"/>
</dbReference>
<dbReference type="Pfam" id="PF05746">
    <property type="entry name" value="DALR_1"/>
    <property type="match status" value="1"/>
</dbReference>
<dbReference type="Pfam" id="PF00750">
    <property type="entry name" value="tRNA-synt_1d"/>
    <property type="match status" value="1"/>
</dbReference>
<dbReference type="PRINTS" id="PR01038">
    <property type="entry name" value="TRNASYNTHARG"/>
</dbReference>
<dbReference type="SMART" id="SM01016">
    <property type="entry name" value="Arg_tRNA_synt_N"/>
    <property type="match status" value="1"/>
</dbReference>
<dbReference type="SMART" id="SM00836">
    <property type="entry name" value="DALR_1"/>
    <property type="match status" value="1"/>
</dbReference>
<dbReference type="SUPFAM" id="SSF47323">
    <property type="entry name" value="Anticodon-binding domain of a subclass of class I aminoacyl-tRNA synthetases"/>
    <property type="match status" value="1"/>
</dbReference>
<dbReference type="SUPFAM" id="SSF55190">
    <property type="entry name" value="Arginyl-tRNA synthetase (ArgRS), N-terminal 'additional' domain"/>
    <property type="match status" value="1"/>
</dbReference>
<dbReference type="SUPFAM" id="SSF52374">
    <property type="entry name" value="Nucleotidylyl transferase"/>
    <property type="match status" value="1"/>
</dbReference>
<dbReference type="PROSITE" id="PS00178">
    <property type="entry name" value="AA_TRNA_LIGASE_I"/>
    <property type="match status" value="1"/>
</dbReference>
<accession>Q5PAM4</accession>
<gene>
    <name evidence="1" type="primary">argS</name>
    <name type="ordered locus">AM678</name>
</gene>
<reference key="1">
    <citation type="journal article" date="2005" name="Proc. Natl. Acad. Sci. U.S.A.">
        <title>Complete genome sequencing of Anaplasma marginale reveals that the surface is skewed to two superfamilies of outer membrane proteins.</title>
        <authorList>
            <person name="Brayton K.A."/>
            <person name="Kappmeyer L.S."/>
            <person name="Herndon D.R."/>
            <person name="Dark M.J."/>
            <person name="Tibbals D.L."/>
            <person name="Palmer G.H."/>
            <person name="McGuire T.C."/>
            <person name="Knowles D.P. Jr."/>
        </authorList>
    </citation>
    <scope>NUCLEOTIDE SEQUENCE [LARGE SCALE GENOMIC DNA]</scope>
    <source>
        <strain>St. Maries</strain>
    </source>
</reference>
<name>SYR_ANAMM</name>